<feature type="chain" id="PRO_0000225825" description="UPF0145 protein ECA2666">
    <location>
        <begin position="1"/>
        <end position="107"/>
    </location>
</feature>
<keyword id="KW-1185">Reference proteome</keyword>
<sequence>MQLSTTPNLEGFTITEYCGVVTGEAILGANIFRDFFASIRDVVGGRSGAYEKELRKARQIAFKELQEQAEDLGANAIVGIDLDYETVGKDGSMLMVTVSGTAVKVRR</sequence>
<dbReference type="EMBL" id="BX950851">
    <property type="protein sequence ID" value="CAG75566.1"/>
    <property type="molecule type" value="Genomic_DNA"/>
</dbReference>
<dbReference type="RefSeq" id="WP_005967367.1">
    <property type="nucleotide sequence ID" value="NC_004547.2"/>
</dbReference>
<dbReference type="SMR" id="Q6D3S8"/>
<dbReference type="STRING" id="218491.ECA2666"/>
<dbReference type="KEGG" id="eca:ECA2666"/>
<dbReference type="eggNOG" id="COG0393">
    <property type="taxonomic scope" value="Bacteria"/>
</dbReference>
<dbReference type="HOGENOM" id="CLU_117144_3_2_6"/>
<dbReference type="OrthoDB" id="9796448at2"/>
<dbReference type="Proteomes" id="UP000007966">
    <property type="component" value="Chromosome"/>
</dbReference>
<dbReference type="Gene3D" id="3.30.110.70">
    <property type="entry name" value="Hypothetical protein apc22750. Chain B"/>
    <property type="match status" value="1"/>
</dbReference>
<dbReference type="HAMAP" id="MF_00338">
    <property type="entry name" value="UPF0145"/>
    <property type="match status" value="1"/>
</dbReference>
<dbReference type="InterPro" id="IPR035439">
    <property type="entry name" value="UPF0145_dom_sf"/>
</dbReference>
<dbReference type="InterPro" id="IPR002765">
    <property type="entry name" value="UPF0145_YbjQ-like"/>
</dbReference>
<dbReference type="NCBIfam" id="NF002776">
    <property type="entry name" value="PRK02877.1"/>
    <property type="match status" value="1"/>
</dbReference>
<dbReference type="PANTHER" id="PTHR34068">
    <property type="entry name" value="UPF0145 PROTEIN YBJQ"/>
    <property type="match status" value="1"/>
</dbReference>
<dbReference type="PANTHER" id="PTHR34068:SF1">
    <property type="entry name" value="UPF0145 PROTEIN YBJQ"/>
    <property type="match status" value="1"/>
</dbReference>
<dbReference type="Pfam" id="PF01906">
    <property type="entry name" value="YbjQ_1"/>
    <property type="match status" value="1"/>
</dbReference>
<dbReference type="SUPFAM" id="SSF117782">
    <property type="entry name" value="YbjQ-like"/>
    <property type="match status" value="1"/>
</dbReference>
<proteinExistence type="inferred from homology"/>
<name>Y2666_PECAS</name>
<comment type="similarity">
    <text evidence="1">Belongs to the UPF0145 family.</text>
</comment>
<reference key="1">
    <citation type="journal article" date="2004" name="Proc. Natl. Acad. Sci. U.S.A.">
        <title>Genome sequence of the enterobacterial phytopathogen Erwinia carotovora subsp. atroseptica and characterization of virulence factors.</title>
        <authorList>
            <person name="Bell K.S."/>
            <person name="Sebaihia M."/>
            <person name="Pritchard L."/>
            <person name="Holden M.T.G."/>
            <person name="Hyman L.J."/>
            <person name="Holeva M.C."/>
            <person name="Thomson N.R."/>
            <person name="Bentley S.D."/>
            <person name="Churcher L.J.C."/>
            <person name="Mungall K."/>
            <person name="Atkin R."/>
            <person name="Bason N."/>
            <person name="Brooks K."/>
            <person name="Chillingworth T."/>
            <person name="Clark K."/>
            <person name="Doggett J."/>
            <person name="Fraser A."/>
            <person name="Hance Z."/>
            <person name="Hauser H."/>
            <person name="Jagels K."/>
            <person name="Moule S."/>
            <person name="Norbertczak H."/>
            <person name="Ormond D."/>
            <person name="Price C."/>
            <person name="Quail M.A."/>
            <person name="Sanders M."/>
            <person name="Walker D."/>
            <person name="Whitehead S."/>
            <person name="Salmond G.P.C."/>
            <person name="Birch P.R.J."/>
            <person name="Parkhill J."/>
            <person name="Toth I.K."/>
        </authorList>
    </citation>
    <scope>NUCLEOTIDE SEQUENCE [LARGE SCALE GENOMIC DNA]</scope>
    <source>
        <strain>SCRI 1043 / ATCC BAA-672</strain>
    </source>
</reference>
<gene>
    <name type="ordered locus">ECA2666</name>
</gene>
<evidence type="ECO:0000255" key="1">
    <source>
        <dbReference type="HAMAP-Rule" id="MF_00338"/>
    </source>
</evidence>
<protein>
    <recommendedName>
        <fullName evidence="1">UPF0145 protein ECA2666</fullName>
    </recommendedName>
</protein>
<accession>Q6D3S8</accession>
<organism>
    <name type="scientific">Pectobacterium atrosepticum (strain SCRI 1043 / ATCC BAA-672)</name>
    <name type="common">Erwinia carotovora subsp. atroseptica</name>
    <dbReference type="NCBI Taxonomy" id="218491"/>
    <lineage>
        <taxon>Bacteria</taxon>
        <taxon>Pseudomonadati</taxon>
        <taxon>Pseudomonadota</taxon>
        <taxon>Gammaproteobacteria</taxon>
        <taxon>Enterobacterales</taxon>
        <taxon>Pectobacteriaceae</taxon>
        <taxon>Pectobacterium</taxon>
    </lineage>
</organism>